<keyword id="KW-0963">Cytoplasm</keyword>
<gene>
    <name evidence="1" type="primary">cutC</name>
    <name type="ordered locus">mlr1122</name>
</gene>
<reference key="1">
    <citation type="journal article" date="2000" name="DNA Res.">
        <title>Complete genome structure of the nitrogen-fixing symbiotic bacterium Mesorhizobium loti.</title>
        <authorList>
            <person name="Kaneko T."/>
            <person name="Nakamura Y."/>
            <person name="Sato S."/>
            <person name="Asamizu E."/>
            <person name="Kato T."/>
            <person name="Sasamoto S."/>
            <person name="Watanabe A."/>
            <person name="Idesawa K."/>
            <person name="Ishikawa A."/>
            <person name="Kawashima K."/>
            <person name="Kimura T."/>
            <person name="Kishida Y."/>
            <person name="Kiyokawa C."/>
            <person name="Kohara M."/>
            <person name="Matsumoto M."/>
            <person name="Matsuno A."/>
            <person name="Mochizuki Y."/>
            <person name="Nakayama S."/>
            <person name="Nakazaki N."/>
            <person name="Shimpo S."/>
            <person name="Sugimoto M."/>
            <person name="Takeuchi C."/>
            <person name="Yamada M."/>
            <person name="Tabata S."/>
        </authorList>
    </citation>
    <scope>NUCLEOTIDE SEQUENCE [LARGE SCALE GENOMIC DNA]</scope>
    <source>
        <strain>LMG 29417 / CECT 9101 / MAFF 303099</strain>
    </source>
</reference>
<feature type="chain" id="PRO_0000215072" description="PF03932 family protein CutC">
    <location>
        <begin position="1"/>
        <end position="258"/>
    </location>
</feature>
<accession>Q98L96</accession>
<organism>
    <name type="scientific">Mesorhizobium japonicum (strain LMG 29417 / CECT 9101 / MAFF 303099)</name>
    <name type="common">Mesorhizobium loti (strain MAFF 303099)</name>
    <dbReference type="NCBI Taxonomy" id="266835"/>
    <lineage>
        <taxon>Bacteria</taxon>
        <taxon>Pseudomonadati</taxon>
        <taxon>Pseudomonadota</taxon>
        <taxon>Alphaproteobacteria</taxon>
        <taxon>Hyphomicrobiales</taxon>
        <taxon>Phyllobacteriaceae</taxon>
        <taxon>Mesorhizobium</taxon>
    </lineage>
</organism>
<evidence type="ECO:0000255" key="1">
    <source>
        <dbReference type="HAMAP-Rule" id="MF_00795"/>
    </source>
</evidence>
<sequence>MDWIDPLTTETRLPLIEICVEGIDGLLAAQAAGADRVELCASLVEGGITPSLGTVRAALDQATVPFHVMVRPRGGDFLYSETEYRSMLADVAALRDLGVPGVVFGCLNADGTIDEKRMGELTEAAGPLNVTCHRAFDMTRDPAEALEALIRCKVGRVLTSGQRDSAIEGLPLLADLVRQAGDRIIILGCGGLDLANIAEVRRKTGLAEMHFAALKDVPSTMRYRNPKVGMGGSDLDREYRNTLTDTPLVAATIAAAKA</sequence>
<proteinExistence type="inferred from homology"/>
<dbReference type="EMBL" id="BA000012">
    <property type="protein sequence ID" value="BAB48567.1"/>
    <property type="molecule type" value="Genomic_DNA"/>
</dbReference>
<dbReference type="RefSeq" id="WP_010909921.1">
    <property type="nucleotide sequence ID" value="NC_002678.2"/>
</dbReference>
<dbReference type="SMR" id="Q98L96"/>
<dbReference type="KEGG" id="mlo:mlr1122"/>
<dbReference type="PATRIC" id="fig|266835.9.peg.904"/>
<dbReference type="eggNOG" id="COG3142">
    <property type="taxonomic scope" value="Bacteria"/>
</dbReference>
<dbReference type="HOGENOM" id="CLU_050555_3_1_5"/>
<dbReference type="Proteomes" id="UP000000552">
    <property type="component" value="Chromosome"/>
</dbReference>
<dbReference type="GO" id="GO:0005737">
    <property type="term" value="C:cytoplasm"/>
    <property type="evidence" value="ECO:0007669"/>
    <property type="project" value="UniProtKB-SubCell"/>
</dbReference>
<dbReference type="GO" id="GO:0005507">
    <property type="term" value="F:copper ion binding"/>
    <property type="evidence" value="ECO:0007669"/>
    <property type="project" value="TreeGrafter"/>
</dbReference>
<dbReference type="FunFam" id="3.20.20.380:FF:000001">
    <property type="entry name" value="Copper homeostasis protein CutC"/>
    <property type="match status" value="1"/>
</dbReference>
<dbReference type="Gene3D" id="3.20.20.380">
    <property type="entry name" value="Copper homeostasis (CutC) domain"/>
    <property type="match status" value="1"/>
</dbReference>
<dbReference type="HAMAP" id="MF_00795">
    <property type="entry name" value="CutC"/>
    <property type="match status" value="1"/>
</dbReference>
<dbReference type="InterPro" id="IPR005627">
    <property type="entry name" value="CutC-like"/>
</dbReference>
<dbReference type="InterPro" id="IPR036822">
    <property type="entry name" value="CutC-like_dom_sf"/>
</dbReference>
<dbReference type="PANTHER" id="PTHR12598">
    <property type="entry name" value="COPPER HOMEOSTASIS PROTEIN CUTC"/>
    <property type="match status" value="1"/>
</dbReference>
<dbReference type="PANTHER" id="PTHR12598:SF0">
    <property type="entry name" value="COPPER HOMEOSTASIS PROTEIN CUTC HOMOLOG"/>
    <property type="match status" value="1"/>
</dbReference>
<dbReference type="Pfam" id="PF03932">
    <property type="entry name" value="CutC"/>
    <property type="match status" value="1"/>
</dbReference>
<dbReference type="SUPFAM" id="SSF110395">
    <property type="entry name" value="CutC-like"/>
    <property type="match status" value="1"/>
</dbReference>
<name>CUTC_RHILO</name>
<protein>
    <recommendedName>
        <fullName evidence="1">PF03932 family protein CutC</fullName>
    </recommendedName>
</protein>
<comment type="subcellular location">
    <subcellularLocation>
        <location evidence="1">Cytoplasm</location>
    </subcellularLocation>
</comment>
<comment type="similarity">
    <text evidence="1">Belongs to the CutC family.</text>
</comment>
<comment type="caution">
    <text evidence="1">Once thought to be involved in copper homeostasis, experiments in E.coli have shown this is not the case.</text>
</comment>